<name>TAM_STRAW</name>
<sequence>MPAAVPSWDPSQYLRHADHRARPFADLLARVPELPRDPARIADLGCGPGNVTRLIAERWPTARITGLDNSPEMLAKAAAYAGPTAGGGRLDFAAADARTWTPAQPYDLIVSNATLQWVPGHIDRLPAWTDGLAPGGTLAFQVPGNFDSPSHRLMRELAHSARWKDRLADTLRHDDAVHTPAAYLEALTALGCAADVWETTYLHLLQGEDPVLDWVKGTGLRPVLTELGAADAEAFVAEYREALREAYPATERGTVFPFRRVFAVAHKEA</sequence>
<comment type="function">
    <text evidence="1">Catalyzes the S-adenosylmethionine monomethyl esterification of trans-aconitate.</text>
</comment>
<comment type="catalytic activity">
    <reaction evidence="1">
        <text>trans-aconitate + S-adenosyl-L-methionine = (E)-3-(methoxycarbonyl)pent-2-enedioate + S-adenosyl-L-homocysteine</text>
        <dbReference type="Rhea" id="RHEA:14969"/>
        <dbReference type="ChEBI" id="CHEBI:15708"/>
        <dbReference type="ChEBI" id="CHEBI:57470"/>
        <dbReference type="ChEBI" id="CHEBI:57856"/>
        <dbReference type="ChEBI" id="CHEBI:59789"/>
        <dbReference type="EC" id="2.1.1.144"/>
    </reaction>
</comment>
<comment type="subcellular location">
    <subcellularLocation>
        <location evidence="1">Cytoplasm</location>
    </subcellularLocation>
</comment>
<comment type="similarity">
    <text evidence="1">Belongs to the methyltransferase superfamily. Tam family.</text>
</comment>
<gene>
    <name evidence="1" type="primary">tam</name>
    <name type="ordered locus">SAV_3570</name>
</gene>
<dbReference type="EC" id="2.1.1.144" evidence="1"/>
<dbReference type="EMBL" id="BA000030">
    <property type="protein sequence ID" value="BAC71282.1"/>
    <property type="molecule type" value="Genomic_DNA"/>
</dbReference>
<dbReference type="RefSeq" id="WP_010985001.1">
    <property type="nucleotide sequence ID" value="NZ_JZJK01000090.1"/>
</dbReference>
<dbReference type="SMR" id="Q82HD9"/>
<dbReference type="GeneID" id="41540635"/>
<dbReference type="KEGG" id="sma:SAVERM_3570"/>
<dbReference type="eggNOG" id="COG4106">
    <property type="taxonomic scope" value="Bacteria"/>
</dbReference>
<dbReference type="HOGENOM" id="CLU_037990_5_2_11"/>
<dbReference type="OrthoDB" id="9795085at2"/>
<dbReference type="Proteomes" id="UP000000428">
    <property type="component" value="Chromosome"/>
</dbReference>
<dbReference type="GO" id="GO:0005737">
    <property type="term" value="C:cytoplasm"/>
    <property type="evidence" value="ECO:0007669"/>
    <property type="project" value="UniProtKB-SubCell"/>
</dbReference>
<dbReference type="GO" id="GO:0030798">
    <property type="term" value="F:trans-aconitate 2-methyltransferase activity"/>
    <property type="evidence" value="ECO:0007669"/>
    <property type="project" value="UniProtKB-UniRule"/>
</dbReference>
<dbReference type="GO" id="GO:0017000">
    <property type="term" value="P:antibiotic biosynthetic process"/>
    <property type="evidence" value="ECO:0007669"/>
    <property type="project" value="UniProtKB-ARBA"/>
</dbReference>
<dbReference type="GO" id="GO:0032259">
    <property type="term" value="P:methylation"/>
    <property type="evidence" value="ECO:0007669"/>
    <property type="project" value="UniProtKB-KW"/>
</dbReference>
<dbReference type="CDD" id="cd02440">
    <property type="entry name" value="AdoMet_MTases"/>
    <property type="match status" value="1"/>
</dbReference>
<dbReference type="Gene3D" id="1.10.150.290">
    <property type="entry name" value="S-adenosyl-L-methionine-dependent methyltransferases"/>
    <property type="match status" value="1"/>
</dbReference>
<dbReference type="Gene3D" id="3.40.50.150">
    <property type="entry name" value="Vaccinia Virus protein VP39"/>
    <property type="match status" value="1"/>
</dbReference>
<dbReference type="HAMAP" id="MF_00560">
    <property type="entry name" value="Tran_acon_Me_trans"/>
    <property type="match status" value="1"/>
</dbReference>
<dbReference type="InterPro" id="IPR041698">
    <property type="entry name" value="Methyltransf_25"/>
</dbReference>
<dbReference type="InterPro" id="IPR029063">
    <property type="entry name" value="SAM-dependent_MTases_sf"/>
</dbReference>
<dbReference type="InterPro" id="IPR023506">
    <property type="entry name" value="Trans-aconitate_MeTrfase"/>
</dbReference>
<dbReference type="InterPro" id="IPR023149">
    <property type="entry name" value="Trans_acon_MeTrfase_C"/>
</dbReference>
<dbReference type="NCBIfam" id="NF010703">
    <property type="entry name" value="PRK14103.1"/>
    <property type="match status" value="1"/>
</dbReference>
<dbReference type="PANTHER" id="PTHR43861:SF1">
    <property type="entry name" value="TRANS-ACONITATE 2-METHYLTRANSFERASE"/>
    <property type="match status" value="1"/>
</dbReference>
<dbReference type="PANTHER" id="PTHR43861">
    <property type="entry name" value="TRANS-ACONITATE 2-METHYLTRANSFERASE-RELATED"/>
    <property type="match status" value="1"/>
</dbReference>
<dbReference type="Pfam" id="PF13649">
    <property type="entry name" value="Methyltransf_25"/>
    <property type="match status" value="1"/>
</dbReference>
<dbReference type="SUPFAM" id="SSF53335">
    <property type="entry name" value="S-adenosyl-L-methionine-dependent methyltransferases"/>
    <property type="match status" value="1"/>
</dbReference>
<protein>
    <recommendedName>
        <fullName evidence="1">Trans-aconitate 2-methyltransferase</fullName>
        <ecNumber evidence="1">2.1.1.144</ecNumber>
    </recommendedName>
</protein>
<organism>
    <name type="scientific">Streptomyces avermitilis (strain ATCC 31267 / DSM 46492 / JCM 5070 / NBRC 14893 / NCIMB 12804 / NRRL 8165 / MA-4680)</name>
    <dbReference type="NCBI Taxonomy" id="227882"/>
    <lineage>
        <taxon>Bacteria</taxon>
        <taxon>Bacillati</taxon>
        <taxon>Actinomycetota</taxon>
        <taxon>Actinomycetes</taxon>
        <taxon>Kitasatosporales</taxon>
        <taxon>Streptomycetaceae</taxon>
        <taxon>Streptomyces</taxon>
    </lineage>
</organism>
<feature type="chain" id="PRO_1000056584" description="Trans-aconitate 2-methyltransferase">
    <location>
        <begin position="1"/>
        <end position="269"/>
    </location>
</feature>
<accession>Q82HD9</accession>
<keyword id="KW-0963">Cytoplasm</keyword>
<keyword id="KW-0489">Methyltransferase</keyword>
<keyword id="KW-1185">Reference proteome</keyword>
<keyword id="KW-0949">S-adenosyl-L-methionine</keyword>
<keyword id="KW-0808">Transferase</keyword>
<evidence type="ECO:0000255" key="1">
    <source>
        <dbReference type="HAMAP-Rule" id="MF_00560"/>
    </source>
</evidence>
<proteinExistence type="inferred from homology"/>
<reference key="1">
    <citation type="journal article" date="2003" name="Nat. Biotechnol.">
        <title>Complete genome sequence and comparative analysis of the industrial microorganism Streptomyces avermitilis.</title>
        <authorList>
            <person name="Ikeda H."/>
            <person name="Ishikawa J."/>
            <person name="Hanamoto A."/>
            <person name="Shinose M."/>
            <person name="Kikuchi H."/>
            <person name="Shiba T."/>
            <person name="Sakaki Y."/>
            <person name="Hattori M."/>
            <person name="Omura S."/>
        </authorList>
    </citation>
    <scope>NUCLEOTIDE SEQUENCE [LARGE SCALE GENOMIC DNA]</scope>
    <source>
        <strain>ATCC 31267 / DSM 46492 / JCM 5070 / NBRC 14893 / NCIMB 12804 / NRRL 8165 / MA-4680</strain>
    </source>
</reference>
<reference key="2">
    <citation type="journal article" date="2001" name="Proc. Natl. Acad. Sci. U.S.A.">
        <title>Genome sequence of an industrial microorganism Streptomyces avermitilis: deducing the ability of producing secondary metabolites.</title>
        <authorList>
            <person name="Omura S."/>
            <person name="Ikeda H."/>
            <person name="Ishikawa J."/>
            <person name="Hanamoto A."/>
            <person name="Takahashi C."/>
            <person name="Shinose M."/>
            <person name="Takahashi Y."/>
            <person name="Horikawa H."/>
            <person name="Nakazawa H."/>
            <person name="Osonoe T."/>
            <person name="Kikuchi H."/>
            <person name="Shiba T."/>
            <person name="Sakaki Y."/>
            <person name="Hattori M."/>
        </authorList>
    </citation>
    <scope>NUCLEOTIDE SEQUENCE [LARGE SCALE GENOMIC DNA]</scope>
    <source>
        <strain>ATCC 31267 / DSM 46492 / JCM 5070 / NBRC 14893 / NCIMB 12804 / NRRL 8165 / MA-4680</strain>
    </source>
</reference>